<gene>
    <name type="ORF">ORF246</name>
</gene>
<protein>
    <recommendedName>
        <fullName>Uncharacterized protein ORF246</fullName>
    </recommendedName>
</protein>
<feature type="chain" id="PRO_0000384522" description="Uncharacterized protein ORF246">
    <location>
        <begin position="1"/>
        <end position="246"/>
    </location>
</feature>
<dbReference type="EMBL" id="AJ854042">
    <property type="protein sequence ID" value="CAH69428.1"/>
    <property type="molecule type" value="Genomic_DNA"/>
</dbReference>
<dbReference type="RefSeq" id="YP_001496966.1">
    <property type="nucleotide sequence ID" value="NC_009884.1"/>
</dbReference>
<dbReference type="KEGG" id="vg:5656066"/>
<dbReference type="Proteomes" id="UP000006364">
    <property type="component" value="Genome"/>
</dbReference>
<reference key="1">
    <citation type="journal article" date="2005" name="J. Bacteriol.">
        <title>Structure and genome organization of AFV2, a novel archaeal lipothrixvirus with unusual terminal and core structures.</title>
        <authorList>
            <person name="Haring M."/>
            <person name="Vestergaard G."/>
            <person name="Brugger K."/>
            <person name="Rachel R."/>
            <person name="Garrett R.A."/>
            <person name="Prangishvili D."/>
        </authorList>
    </citation>
    <scope>NUCLEOTIDE SEQUENCE [GENOMIC DNA]</scope>
</reference>
<proteinExistence type="predicted"/>
<organismHost>
    <name type="scientific">Acidianus sp. F28</name>
    <dbReference type="NCBI Taxonomy" id="315458"/>
</organismHost>
<name>Y246_AFV2P</name>
<keyword id="KW-1185">Reference proteome</keyword>
<organism>
    <name type="scientific">Acidianus filamentous virus 2 (isolate Italy/Pozzuoli)</name>
    <name type="common">AFV-2</name>
    <dbReference type="NCBI Taxonomy" id="654910"/>
    <lineage>
        <taxon>Viruses</taxon>
        <taxon>Adnaviria</taxon>
        <taxon>Zilligvirae</taxon>
        <taxon>Taleaviricota</taxon>
        <taxon>Tokiviricetes</taxon>
        <taxon>Ligamenvirales</taxon>
        <taxon>Lipothrixviridae</taxon>
        <taxon>Deltalipothrixvirus</taxon>
        <taxon>Acidianus filamentous virus 2</taxon>
    </lineage>
</organism>
<sequence>MTLSNEYLNAVSMMIVYGQDNSGTDFNYYYYSATTYSTYAPTGVVAVLKNSGNVVATLTGYQISLSTSSVKFIFYDTSNNEYSFDEVDIYTEMNGTLALLVSRTTGLSYSKSASEAVVAYFTLSLSQSPSLYINYAFMYLLVPRLVLQNVFPFSNYVGITSYSVSQVSGTISFDGAGYSNGELIIFLTLSTTGGANPIITAVTTQASTTTPSISSNQVLQAILPAPLPSTSSPVQYPIQIGVQYEE</sequence>
<accession>Q573C8</accession>